<organism>
    <name type="scientific">Naumovozyma castellii</name>
    <name type="common">Yeast</name>
    <name type="synonym">Saccharomyces castellii</name>
    <dbReference type="NCBI Taxonomy" id="27288"/>
    <lineage>
        <taxon>Eukaryota</taxon>
        <taxon>Fungi</taxon>
        <taxon>Dikarya</taxon>
        <taxon>Ascomycota</taxon>
        <taxon>Saccharomycotina</taxon>
        <taxon>Saccharomycetes</taxon>
        <taxon>Saccharomycetales</taxon>
        <taxon>Saccharomycetaceae</taxon>
        <taxon>Naumovozyma</taxon>
    </lineage>
</organism>
<dbReference type="EMBL" id="AY144957">
    <property type="protein sequence ID" value="AAO32520.1"/>
    <property type="molecule type" value="Genomic_DNA"/>
</dbReference>
<dbReference type="EMBL" id="HE576752">
    <property type="protein sequence ID" value="CCC67728.1"/>
    <property type="molecule type" value="Genomic_DNA"/>
</dbReference>
<dbReference type="PDB" id="5LYB">
    <property type="method" value="X-ray"/>
    <property type="resolution" value="3.25 A"/>
    <property type="chains" value="D3/d3=2-145"/>
</dbReference>
<dbReference type="PDB" id="5TGM">
    <property type="method" value="X-ray"/>
    <property type="resolution" value="3.50 A"/>
    <property type="chains" value="D3/d3=2-145"/>
</dbReference>
<dbReference type="PDB" id="5WLC">
    <property type="method" value="EM"/>
    <property type="resolution" value="3.80 A"/>
    <property type="chains" value="SR=1-145"/>
</dbReference>
<dbReference type="PDB" id="8EUB">
    <property type="method" value="EM"/>
    <property type="resolution" value="2.52 A"/>
    <property type="chains" value="BX=1-145"/>
</dbReference>
<dbReference type="PDB" id="8EVP">
    <property type="method" value="EM"/>
    <property type="resolution" value="2.38 A"/>
    <property type="chains" value="BX=1-145"/>
</dbReference>
<dbReference type="PDBsum" id="5LYB"/>
<dbReference type="PDBsum" id="5TGM"/>
<dbReference type="PDBsum" id="5WLC"/>
<dbReference type="PDBsum" id="8EUB"/>
<dbReference type="PDBsum" id="8EVP"/>
<dbReference type="EMDB" id="EMD-28610"/>
<dbReference type="EMDB" id="EMD-28632"/>
<dbReference type="EMDB" id="EMD-8859"/>
<dbReference type="SMR" id="P0CY39"/>
<dbReference type="FunCoup" id="P0CY39">
    <property type="interactions" value="938"/>
</dbReference>
<dbReference type="STRING" id="1064592.P0CY39"/>
<dbReference type="KEGG" id="ncs:NCAS_0A11700"/>
<dbReference type="KEGG" id="ncs:NCAS_0E00920"/>
<dbReference type="eggNOG" id="KOG1749">
    <property type="taxonomic scope" value="Eukaryota"/>
</dbReference>
<dbReference type="HOGENOM" id="CLU_115574_0_1_1"/>
<dbReference type="InParanoid" id="P0CY39"/>
<dbReference type="OMA" id="WKKPFAC"/>
<dbReference type="OrthoDB" id="1713912at2759"/>
<dbReference type="Proteomes" id="UP000001640">
    <property type="component" value="Chromosome 1"/>
</dbReference>
<dbReference type="GO" id="GO:0022627">
    <property type="term" value="C:cytosolic small ribosomal subunit"/>
    <property type="evidence" value="ECO:0007669"/>
    <property type="project" value="EnsemblFungi"/>
</dbReference>
<dbReference type="GO" id="GO:0003735">
    <property type="term" value="F:structural constituent of ribosome"/>
    <property type="evidence" value="ECO:0007669"/>
    <property type="project" value="EnsemblFungi"/>
</dbReference>
<dbReference type="GO" id="GO:1990145">
    <property type="term" value="P:maintenance of translational fidelity"/>
    <property type="evidence" value="ECO:0007669"/>
    <property type="project" value="EnsemblFungi"/>
</dbReference>
<dbReference type="GO" id="GO:0000462">
    <property type="term" value="P:maturation of SSU-rRNA from tricistronic rRNA transcript (SSU-rRNA, 5.8S rRNA, LSU-rRNA)"/>
    <property type="evidence" value="ECO:0007669"/>
    <property type="project" value="EnsemblFungi"/>
</dbReference>
<dbReference type="GO" id="GO:0006450">
    <property type="term" value="P:regulation of translational fidelity"/>
    <property type="evidence" value="ECO:0007669"/>
    <property type="project" value="EnsemblFungi"/>
</dbReference>
<dbReference type="CDD" id="cd03367">
    <property type="entry name" value="Ribosomal_S23"/>
    <property type="match status" value="1"/>
</dbReference>
<dbReference type="FunFam" id="2.40.50.140:FF:000007">
    <property type="entry name" value="40S ribosomal protein S23"/>
    <property type="match status" value="1"/>
</dbReference>
<dbReference type="Gene3D" id="2.40.50.140">
    <property type="entry name" value="Nucleic acid-binding proteins"/>
    <property type="match status" value="1"/>
</dbReference>
<dbReference type="InterPro" id="IPR012340">
    <property type="entry name" value="NA-bd_OB-fold"/>
</dbReference>
<dbReference type="InterPro" id="IPR006032">
    <property type="entry name" value="Ribosomal_uS12"/>
</dbReference>
<dbReference type="InterPro" id="IPR005680">
    <property type="entry name" value="Ribosomal_uS12_euk/arc"/>
</dbReference>
<dbReference type="NCBIfam" id="NF003254">
    <property type="entry name" value="PRK04211.1"/>
    <property type="match status" value="1"/>
</dbReference>
<dbReference type="NCBIfam" id="TIGR00982">
    <property type="entry name" value="uS12_E_A"/>
    <property type="match status" value="1"/>
</dbReference>
<dbReference type="PANTHER" id="PTHR11652">
    <property type="entry name" value="30S RIBOSOMAL PROTEIN S12 FAMILY MEMBER"/>
    <property type="match status" value="1"/>
</dbReference>
<dbReference type="Pfam" id="PF00164">
    <property type="entry name" value="Ribosom_S12_S23"/>
    <property type="match status" value="1"/>
</dbReference>
<dbReference type="PIRSF" id="PIRSF002133">
    <property type="entry name" value="Ribosomal_S12/S23"/>
    <property type="match status" value="1"/>
</dbReference>
<dbReference type="SUPFAM" id="SSF50249">
    <property type="entry name" value="Nucleic acid-binding proteins"/>
    <property type="match status" value="1"/>
</dbReference>
<dbReference type="PROSITE" id="PS00055">
    <property type="entry name" value="RIBOSOMAL_S12"/>
    <property type="match status" value="1"/>
</dbReference>
<gene>
    <name type="primary">RPS23A</name>
    <name type="ordered locus">NCAS_0A11700</name>
</gene>
<comment type="similarity">
    <text evidence="2">Belongs to the universal ribosomal protein uS12 family.</text>
</comment>
<proteinExistence type="evidence at protein level"/>
<feature type="chain" id="PRO_0000146481" description="Small ribosomal subunit protein uS12A">
    <location>
        <begin position="1"/>
        <end position="145"/>
    </location>
</feature>
<feature type="modified residue" description="Hydroxyproline" evidence="1">
    <location>
        <position position="64"/>
    </location>
</feature>
<reference key="1">
    <citation type="journal article" date="2003" name="Nature">
        <title>Yeast genome duplication was followed by asynchronous differentiation of duplicated genes.</title>
        <authorList>
            <person name="Langkjaer R.B."/>
            <person name="Cliften P.F."/>
            <person name="Johnston M."/>
            <person name="Piskur J."/>
        </authorList>
    </citation>
    <scope>NUCLEOTIDE SEQUENCE [GENOMIC DNA]</scope>
    <source>
        <strain>ATCC 76901 / BCRC 22586 / CBS 4309 / NBRC 1992 / NRRL Y-12630</strain>
    </source>
</reference>
<reference key="2">
    <citation type="submission" date="2011-07" db="EMBL/GenBank/DDBJ databases">
        <title>Genome sequence of Naumovozyma castellii.</title>
        <authorList>
            <person name="Gordon J.L."/>
            <person name="Armisen D."/>
            <person name="Proux-Wera E."/>
            <person name="OhEigeartaigh S.S."/>
            <person name="Byrne K.P."/>
            <person name="Wolfe K.H."/>
        </authorList>
    </citation>
    <scope>NUCLEOTIDE SEQUENCE [LARGE SCALE GENOMIC DNA]</scope>
    <source>
        <strain>ATCC 76901 / BCRC 22586 / CBS 4309 / NBRC 1992 / NRRL Y-12630</strain>
    </source>
</reference>
<name>RS23A_NAUCA</name>
<accession>P0CY39</accession>
<accession>G0V8D0</accession>
<accession>Q6YIA2</accession>
<keyword id="KW-0002">3D-structure</keyword>
<keyword id="KW-0379">Hydroxylation</keyword>
<keyword id="KW-1185">Reference proteome</keyword>
<keyword id="KW-0687">Ribonucleoprotein</keyword>
<keyword id="KW-0689">Ribosomal protein</keyword>
<sequence length="145" mass="16038">MGKGKPRGLNSARKLRVHRRNNRWAENNYKKRLLGTAFKSSPFGGSSHAKGIVLEKLGIESKQPNSAIRKCVRVQLIKNGKKVTAFVPNDGCLNFVDENDEVLLAGFGRKGKAKGDIPGVRFKVVKVSGVSLLALWKEKKEKPRS</sequence>
<evidence type="ECO:0000250" key="1"/>
<evidence type="ECO:0000305" key="2"/>
<protein>
    <recommendedName>
        <fullName evidence="2">Small ribosomal subunit protein uS12A</fullName>
    </recommendedName>
    <alternativeName>
        <fullName>40S ribosomal protein S23-A</fullName>
    </alternativeName>
</protein>